<dbReference type="EC" id="3.6.5.-" evidence="1"/>
<dbReference type="EMBL" id="CP000890">
    <property type="protein sequence ID" value="ABX78837.1"/>
    <property type="molecule type" value="Genomic_DNA"/>
</dbReference>
<dbReference type="SMR" id="A9NBL5"/>
<dbReference type="KEGG" id="cbs:COXBURSA331_A0498"/>
<dbReference type="HOGENOM" id="CLU_011747_2_0_6"/>
<dbReference type="GO" id="GO:0005737">
    <property type="term" value="C:cytoplasm"/>
    <property type="evidence" value="ECO:0007669"/>
    <property type="project" value="UniProtKB-SubCell"/>
</dbReference>
<dbReference type="GO" id="GO:0005525">
    <property type="term" value="F:GTP binding"/>
    <property type="evidence" value="ECO:0007669"/>
    <property type="project" value="UniProtKB-UniRule"/>
</dbReference>
<dbReference type="GO" id="GO:0003924">
    <property type="term" value="F:GTPase activity"/>
    <property type="evidence" value="ECO:0007669"/>
    <property type="project" value="UniProtKB-UniRule"/>
</dbReference>
<dbReference type="GO" id="GO:0000287">
    <property type="term" value="F:magnesium ion binding"/>
    <property type="evidence" value="ECO:0007669"/>
    <property type="project" value="InterPro"/>
</dbReference>
<dbReference type="GO" id="GO:0042254">
    <property type="term" value="P:ribosome biogenesis"/>
    <property type="evidence" value="ECO:0007669"/>
    <property type="project" value="UniProtKB-UniRule"/>
</dbReference>
<dbReference type="CDD" id="cd01898">
    <property type="entry name" value="Obg"/>
    <property type="match status" value="1"/>
</dbReference>
<dbReference type="FunFam" id="2.70.210.12:FF:000001">
    <property type="entry name" value="GTPase Obg"/>
    <property type="match status" value="1"/>
</dbReference>
<dbReference type="Gene3D" id="2.70.210.12">
    <property type="entry name" value="GTP1/OBG domain"/>
    <property type="match status" value="1"/>
</dbReference>
<dbReference type="Gene3D" id="3.40.50.300">
    <property type="entry name" value="P-loop containing nucleotide triphosphate hydrolases"/>
    <property type="match status" value="1"/>
</dbReference>
<dbReference type="HAMAP" id="MF_01454">
    <property type="entry name" value="GTPase_Obg"/>
    <property type="match status" value="1"/>
</dbReference>
<dbReference type="InterPro" id="IPR031167">
    <property type="entry name" value="G_OBG"/>
</dbReference>
<dbReference type="InterPro" id="IPR006073">
    <property type="entry name" value="GTP-bd"/>
</dbReference>
<dbReference type="InterPro" id="IPR014100">
    <property type="entry name" value="GTP-bd_Obg/CgtA"/>
</dbReference>
<dbReference type="InterPro" id="IPR006074">
    <property type="entry name" value="GTP1-OBG_CS"/>
</dbReference>
<dbReference type="InterPro" id="IPR006169">
    <property type="entry name" value="GTP1_OBG_dom"/>
</dbReference>
<dbReference type="InterPro" id="IPR036726">
    <property type="entry name" value="GTP1_OBG_dom_sf"/>
</dbReference>
<dbReference type="InterPro" id="IPR045086">
    <property type="entry name" value="OBG_GTPase"/>
</dbReference>
<dbReference type="InterPro" id="IPR027417">
    <property type="entry name" value="P-loop_NTPase"/>
</dbReference>
<dbReference type="NCBIfam" id="TIGR02729">
    <property type="entry name" value="Obg_CgtA"/>
    <property type="match status" value="1"/>
</dbReference>
<dbReference type="NCBIfam" id="NF008955">
    <property type="entry name" value="PRK12297.1"/>
    <property type="match status" value="1"/>
</dbReference>
<dbReference type="NCBIfam" id="NF008956">
    <property type="entry name" value="PRK12299.1"/>
    <property type="match status" value="1"/>
</dbReference>
<dbReference type="PANTHER" id="PTHR11702">
    <property type="entry name" value="DEVELOPMENTALLY REGULATED GTP-BINDING PROTEIN-RELATED"/>
    <property type="match status" value="1"/>
</dbReference>
<dbReference type="PANTHER" id="PTHR11702:SF31">
    <property type="entry name" value="MITOCHONDRIAL RIBOSOME-ASSOCIATED GTPASE 2"/>
    <property type="match status" value="1"/>
</dbReference>
<dbReference type="Pfam" id="PF01018">
    <property type="entry name" value="GTP1_OBG"/>
    <property type="match status" value="1"/>
</dbReference>
<dbReference type="Pfam" id="PF01926">
    <property type="entry name" value="MMR_HSR1"/>
    <property type="match status" value="1"/>
</dbReference>
<dbReference type="PIRSF" id="PIRSF002401">
    <property type="entry name" value="GTP_bd_Obg/CgtA"/>
    <property type="match status" value="1"/>
</dbReference>
<dbReference type="PRINTS" id="PR00326">
    <property type="entry name" value="GTP1OBG"/>
</dbReference>
<dbReference type="SUPFAM" id="SSF82051">
    <property type="entry name" value="Obg GTP-binding protein N-terminal domain"/>
    <property type="match status" value="1"/>
</dbReference>
<dbReference type="SUPFAM" id="SSF52540">
    <property type="entry name" value="P-loop containing nucleoside triphosphate hydrolases"/>
    <property type="match status" value="1"/>
</dbReference>
<dbReference type="PROSITE" id="PS51710">
    <property type="entry name" value="G_OBG"/>
    <property type="match status" value="1"/>
</dbReference>
<dbReference type="PROSITE" id="PS00905">
    <property type="entry name" value="GTP1_OBG"/>
    <property type="match status" value="1"/>
</dbReference>
<dbReference type="PROSITE" id="PS51883">
    <property type="entry name" value="OBG"/>
    <property type="match status" value="1"/>
</dbReference>
<comment type="function">
    <text evidence="1">An essential GTPase which binds GTP, GDP and possibly (p)ppGpp with moderate affinity, with high nucleotide exchange rates and a fairly low GTP hydrolysis rate. Plays a role in control of the cell cycle, stress response, ribosome biogenesis and in those bacteria that undergo differentiation, in morphogenesis control.</text>
</comment>
<comment type="cofactor">
    <cofactor evidence="1">
        <name>Mg(2+)</name>
        <dbReference type="ChEBI" id="CHEBI:18420"/>
    </cofactor>
</comment>
<comment type="subunit">
    <text evidence="1">Monomer.</text>
</comment>
<comment type="subcellular location">
    <subcellularLocation>
        <location evidence="1">Cytoplasm</location>
    </subcellularLocation>
</comment>
<comment type="similarity">
    <text evidence="1">Belongs to the TRAFAC class OBG-HflX-like GTPase superfamily. OBG GTPase family.</text>
</comment>
<sequence>MKFVDEAFVRVEAGNGGHGCLSFRREKFIPRGGPDGGDGGDGGSVYFVADKSVNTLVEFRYQRLLRAQNGQPGMGRLRSGKKGEDLIVPVPLGTTVYDKETSELIGDLIEAGDKLCVARGGRHGLGNTHFKSSTNRAPRRTISGEEGEARELKLELKLLADVGLLGLPNAGKSTFIHAVSKATPKIADYPFTTLYPHLGVVRVEEYRSFVIADIPGLIEGASEGAGLGVQFLKHLERTQLLLHIVDIAPLDGSDPVQSIQAIISELEQFSQNLSQKPRWLVFNKIDLLPPDVAQARCQEIINRLNWKGPVYKISAIKRQGTELLCYDLMSFLETNQRSI</sequence>
<gene>
    <name evidence="1" type="primary">obg</name>
    <name type="ordered locus">COXBURSA331_A0498</name>
</gene>
<protein>
    <recommendedName>
        <fullName evidence="1">GTPase Obg</fullName>
        <ecNumber evidence="1">3.6.5.-</ecNumber>
    </recommendedName>
    <alternativeName>
        <fullName evidence="1">GTP-binding protein Obg</fullName>
    </alternativeName>
</protein>
<accession>A9NBL5</accession>
<organism>
    <name type="scientific">Coxiella burnetii (strain RSA 331 / Henzerling II)</name>
    <dbReference type="NCBI Taxonomy" id="360115"/>
    <lineage>
        <taxon>Bacteria</taxon>
        <taxon>Pseudomonadati</taxon>
        <taxon>Pseudomonadota</taxon>
        <taxon>Gammaproteobacteria</taxon>
        <taxon>Legionellales</taxon>
        <taxon>Coxiellaceae</taxon>
        <taxon>Coxiella</taxon>
    </lineage>
</organism>
<proteinExistence type="inferred from homology"/>
<name>OBG_COXBR</name>
<feature type="chain" id="PRO_0000385867" description="GTPase Obg">
    <location>
        <begin position="1"/>
        <end position="339"/>
    </location>
</feature>
<feature type="domain" description="Obg" evidence="2">
    <location>
        <begin position="1"/>
        <end position="159"/>
    </location>
</feature>
<feature type="domain" description="OBG-type G" evidence="1">
    <location>
        <begin position="160"/>
        <end position="333"/>
    </location>
</feature>
<feature type="binding site" evidence="1">
    <location>
        <begin position="166"/>
        <end position="173"/>
    </location>
    <ligand>
        <name>GTP</name>
        <dbReference type="ChEBI" id="CHEBI:37565"/>
    </ligand>
</feature>
<feature type="binding site" evidence="1">
    <location>
        <position position="173"/>
    </location>
    <ligand>
        <name>Mg(2+)</name>
        <dbReference type="ChEBI" id="CHEBI:18420"/>
    </ligand>
</feature>
<feature type="binding site" evidence="1">
    <location>
        <begin position="191"/>
        <end position="195"/>
    </location>
    <ligand>
        <name>GTP</name>
        <dbReference type="ChEBI" id="CHEBI:37565"/>
    </ligand>
</feature>
<feature type="binding site" evidence="1">
    <location>
        <position position="193"/>
    </location>
    <ligand>
        <name>Mg(2+)</name>
        <dbReference type="ChEBI" id="CHEBI:18420"/>
    </ligand>
</feature>
<feature type="binding site" evidence="1">
    <location>
        <begin position="213"/>
        <end position="216"/>
    </location>
    <ligand>
        <name>GTP</name>
        <dbReference type="ChEBI" id="CHEBI:37565"/>
    </ligand>
</feature>
<feature type="binding site" evidence="1">
    <location>
        <begin position="283"/>
        <end position="286"/>
    </location>
    <ligand>
        <name>GTP</name>
        <dbReference type="ChEBI" id="CHEBI:37565"/>
    </ligand>
</feature>
<feature type="binding site" evidence="1">
    <location>
        <begin position="314"/>
        <end position="316"/>
    </location>
    <ligand>
        <name>GTP</name>
        <dbReference type="ChEBI" id="CHEBI:37565"/>
    </ligand>
</feature>
<evidence type="ECO:0000255" key="1">
    <source>
        <dbReference type="HAMAP-Rule" id="MF_01454"/>
    </source>
</evidence>
<evidence type="ECO:0000255" key="2">
    <source>
        <dbReference type="PROSITE-ProRule" id="PRU01231"/>
    </source>
</evidence>
<reference key="1">
    <citation type="submission" date="2007-11" db="EMBL/GenBank/DDBJ databases">
        <title>Genome sequencing of phylogenetically and phenotypically diverse Coxiella burnetii isolates.</title>
        <authorList>
            <person name="Seshadri R."/>
            <person name="Samuel J.E."/>
        </authorList>
    </citation>
    <scope>NUCLEOTIDE SEQUENCE [LARGE SCALE GENOMIC DNA]</scope>
    <source>
        <strain>RSA 331 / Henzerling II</strain>
    </source>
</reference>
<keyword id="KW-0963">Cytoplasm</keyword>
<keyword id="KW-0342">GTP-binding</keyword>
<keyword id="KW-0378">Hydrolase</keyword>
<keyword id="KW-0460">Magnesium</keyword>
<keyword id="KW-0479">Metal-binding</keyword>
<keyword id="KW-0547">Nucleotide-binding</keyword>